<evidence type="ECO:0000255" key="1">
    <source>
        <dbReference type="HAMAP-Rule" id="MF_00232"/>
    </source>
</evidence>
<name>IF2B_NANEQ</name>
<organism>
    <name type="scientific">Nanoarchaeum equitans (strain Kin4-M)</name>
    <dbReference type="NCBI Taxonomy" id="228908"/>
    <lineage>
        <taxon>Archaea</taxon>
        <taxon>Nanobdellota</taxon>
        <taxon>Candidatus Nanoarchaeia</taxon>
        <taxon>Nanoarchaeales</taxon>
        <taxon>Nanoarchaeaceae</taxon>
        <taxon>Nanoarchaeum</taxon>
    </lineage>
</organism>
<comment type="function">
    <text evidence="1">eIF-2 functions in the early steps of protein synthesis by forming a ternary complex with GTP and initiator tRNA.</text>
</comment>
<comment type="subunit">
    <text evidence="1">Heterotrimer composed of an alpha, a beta and a gamma chain.</text>
</comment>
<comment type="similarity">
    <text evidence="1">Belongs to the eIF-2-beta/eIF-5 family.</text>
</comment>
<feature type="chain" id="PRO_0000137426" description="Translation initiation factor 2 subunit beta">
    <location>
        <begin position="1"/>
        <end position="139"/>
    </location>
</feature>
<reference key="1">
    <citation type="journal article" date="2003" name="Proc. Natl. Acad. Sci. U.S.A.">
        <title>The genome of Nanoarchaeum equitans: insights into early archaeal evolution and derived parasitism.</title>
        <authorList>
            <person name="Waters E."/>
            <person name="Hohn M.J."/>
            <person name="Ahel I."/>
            <person name="Graham D.E."/>
            <person name="Adams M.D."/>
            <person name="Barnstead M."/>
            <person name="Beeson K.Y."/>
            <person name="Bibbs L."/>
            <person name="Bolanos R."/>
            <person name="Keller M."/>
            <person name="Kretz K."/>
            <person name="Lin X."/>
            <person name="Mathur E."/>
            <person name="Ni J."/>
            <person name="Podar M."/>
            <person name="Richardson T."/>
            <person name="Sutton G.G."/>
            <person name="Simon M."/>
            <person name="Soell D."/>
            <person name="Stetter K.O."/>
            <person name="Short J.M."/>
            <person name="Noorderwier M."/>
        </authorList>
    </citation>
    <scope>NUCLEOTIDE SEQUENCE [LARGE SCALE GENOMIC DNA]</scope>
    <source>
        <strain>Kin4-M</strain>
    </source>
</reference>
<accession>Q74M98</accession>
<protein>
    <recommendedName>
        <fullName evidence="1">Translation initiation factor 2 subunit beta</fullName>
    </recommendedName>
    <alternativeName>
        <fullName evidence="1">aIF2-beta</fullName>
    </alternativeName>
    <alternativeName>
        <fullName evidence="1">eIF-2-beta</fullName>
    </alternativeName>
</protein>
<sequence length="139" mass="16665">MEYNYFELLERAYQKLKDVIKQEQIRWNPPIPHIEYVKNRTIITNFKQIANYLNRDPKIIAKFFSKELFVQTIIEGNSLIINKRVSYETIKKKLDEFINIFVICPVCKRPDTELIERGRKIYYIKCHACGSESPVNYEL</sequence>
<keyword id="KW-0396">Initiation factor</keyword>
<keyword id="KW-0648">Protein biosynthesis</keyword>
<keyword id="KW-1185">Reference proteome</keyword>
<gene>
    <name evidence="1" type="primary">eif2b</name>
    <name type="ordered locus">NEQ323</name>
</gene>
<dbReference type="EMBL" id="AE017199">
    <property type="protein sequence ID" value="AAR39172.1"/>
    <property type="molecule type" value="Genomic_DNA"/>
</dbReference>
<dbReference type="SMR" id="Q74M98"/>
<dbReference type="STRING" id="228908.NEQ323"/>
<dbReference type="EnsemblBacteria" id="AAR39172">
    <property type="protein sequence ID" value="AAR39172"/>
    <property type="gene ID" value="NEQ323"/>
</dbReference>
<dbReference type="KEGG" id="neq:NEQ323"/>
<dbReference type="HOGENOM" id="CLU_026663_3_1_2"/>
<dbReference type="Proteomes" id="UP000000578">
    <property type="component" value="Chromosome"/>
</dbReference>
<dbReference type="GO" id="GO:0003743">
    <property type="term" value="F:translation initiation factor activity"/>
    <property type="evidence" value="ECO:0007669"/>
    <property type="project" value="UniProtKB-UniRule"/>
</dbReference>
<dbReference type="Gene3D" id="3.30.30.170">
    <property type="match status" value="1"/>
</dbReference>
<dbReference type="HAMAP" id="MF_00232">
    <property type="entry name" value="eIF_2_beta"/>
    <property type="match status" value="1"/>
</dbReference>
<dbReference type="InterPro" id="IPR045196">
    <property type="entry name" value="IF2/IF5"/>
</dbReference>
<dbReference type="InterPro" id="IPR004458">
    <property type="entry name" value="TIF2_bsu_arc"/>
</dbReference>
<dbReference type="InterPro" id="IPR002735">
    <property type="entry name" value="Transl_init_fac_IF2/IF5_dom"/>
</dbReference>
<dbReference type="InterPro" id="IPR016189">
    <property type="entry name" value="Transl_init_fac_IF2/IF5_N"/>
</dbReference>
<dbReference type="InterPro" id="IPR016190">
    <property type="entry name" value="Transl_init_fac_IF2/IF5_Zn-bd"/>
</dbReference>
<dbReference type="NCBIfam" id="NF003067">
    <property type="entry name" value="PRK03988.1"/>
    <property type="match status" value="1"/>
</dbReference>
<dbReference type="PANTHER" id="PTHR23001">
    <property type="entry name" value="EUKARYOTIC TRANSLATION INITIATION FACTOR"/>
    <property type="match status" value="1"/>
</dbReference>
<dbReference type="PANTHER" id="PTHR23001:SF3">
    <property type="entry name" value="EUKARYOTIC TRANSLATION INITIATION FACTOR 2 SUBUNIT 2"/>
    <property type="match status" value="1"/>
</dbReference>
<dbReference type="Pfam" id="PF01873">
    <property type="entry name" value="eIF-5_eIF-2B"/>
    <property type="match status" value="1"/>
</dbReference>
<dbReference type="SMART" id="SM00653">
    <property type="entry name" value="eIF2B_5"/>
    <property type="match status" value="1"/>
</dbReference>
<dbReference type="SUPFAM" id="SSF100966">
    <property type="entry name" value="Translation initiation factor 2 beta, aIF2beta, N-terminal domain"/>
    <property type="match status" value="1"/>
</dbReference>
<dbReference type="SUPFAM" id="SSF75689">
    <property type="entry name" value="Zinc-binding domain of translation initiation factor 2 beta"/>
    <property type="match status" value="1"/>
</dbReference>
<proteinExistence type="inferred from homology"/>